<feature type="chain" id="PRO_0000157346" description="Glycerol-1-phosphate dehydrogenase [NAD(P)+]">
    <location>
        <begin position="1"/>
        <end position="350"/>
    </location>
</feature>
<feature type="binding site" evidence="1">
    <location>
        <begin position="97"/>
        <end position="101"/>
    </location>
    <ligand>
        <name>NAD(+)</name>
        <dbReference type="ChEBI" id="CHEBI:57540"/>
    </ligand>
</feature>
<feature type="binding site" evidence="1">
    <location>
        <begin position="119"/>
        <end position="122"/>
    </location>
    <ligand>
        <name>NAD(+)</name>
        <dbReference type="ChEBI" id="CHEBI:57540"/>
    </ligand>
</feature>
<feature type="binding site" evidence="1">
    <location>
        <position position="124"/>
    </location>
    <ligand>
        <name>substrate</name>
    </ligand>
</feature>
<feature type="binding site" evidence="1">
    <location>
        <position position="128"/>
    </location>
    <ligand>
        <name>NAD(+)</name>
        <dbReference type="ChEBI" id="CHEBI:57540"/>
    </ligand>
</feature>
<feature type="binding site" evidence="1">
    <location>
        <position position="171"/>
    </location>
    <ligand>
        <name>substrate</name>
    </ligand>
</feature>
<feature type="binding site" evidence="1">
    <location>
        <position position="171"/>
    </location>
    <ligand>
        <name>Zn(2+)</name>
        <dbReference type="ChEBI" id="CHEBI:29105"/>
        <note>catalytic</note>
    </ligand>
</feature>
<feature type="binding site" evidence="1">
    <location>
        <position position="251"/>
    </location>
    <ligand>
        <name>Zn(2+)</name>
        <dbReference type="ChEBI" id="CHEBI:29105"/>
        <note>catalytic</note>
    </ligand>
</feature>
<feature type="binding site" evidence="1">
    <location>
        <position position="255"/>
    </location>
    <ligand>
        <name>substrate</name>
    </ligand>
</feature>
<feature type="binding site" evidence="1">
    <location>
        <position position="267"/>
    </location>
    <ligand>
        <name>Zn(2+)</name>
        <dbReference type="ChEBI" id="CHEBI:29105"/>
        <note>catalytic</note>
    </ligand>
</feature>
<gene>
    <name evidence="1" type="primary">egsA</name>
    <name type="ordered locus">PTO0850</name>
</gene>
<keyword id="KW-0963">Cytoplasm</keyword>
<keyword id="KW-0444">Lipid biosynthesis</keyword>
<keyword id="KW-0443">Lipid metabolism</keyword>
<keyword id="KW-0479">Metal-binding</keyword>
<keyword id="KW-0520">NAD</keyword>
<keyword id="KW-0521">NADP</keyword>
<keyword id="KW-0560">Oxidoreductase</keyword>
<keyword id="KW-0594">Phospholipid biosynthesis</keyword>
<keyword id="KW-1208">Phospholipid metabolism</keyword>
<keyword id="KW-0862">Zinc</keyword>
<name>G1PDH_PICTO</name>
<evidence type="ECO:0000255" key="1">
    <source>
        <dbReference type="HAMAP-Rule" id="MF_00497"/>
    </source>
</evidence>
<reference key="1">
    <citation type="journal article" date="2004" name="Proc. Natl. Acad. Sci. U.S.A.">
        <title>Genome sequence of Picrophilus torridus and its implications for life around pH 0.</title>
        <authorList>
            <person name="Fuetterer O."/>
            <person name="Angelov A."/>
            <person name="Liesegang H."/>
            <person name="Gottschalk G."/>
            <person name="Schleper C."/>
            <person name="Schepers B."/>
            <person name="Dock C."/>
            <person name="Antranikian G."/>
            <person name="Liebl W."/>
        </authorList>
    </citation>
    <scope>NUCLEOTIDE SEQUENCE [LARGE SCALE GENOMIC DNA]</scope>
    <source>
        <strain>ATCC 700027 / DSM 9790 / JCM 10055 / NBRC 100828 / KAW 2/3</strain>
    </source>
</reference>
<dbReference type="EC" id="1.1.1.261" evidence="1"/>
<dbReference type="EMBL" id="AE017261">
    <property type="protein sequence ID" value="AAT43435.1"/>
    <property type="molecule type" value="Genomic_DNA"/>
</dbReference>
<dbReference type="RefSeq" id="WP_011177651.1">
    <property type="nucleotide sequence ID" value="NC_005877.1"/>
</dbReference>
<dbReference type="SMR" id="Q6L0R7"/>
<dbReference type="FunCoup" id="Q6L0R7">
    <property type="interactions" value="1"/>
</dbReference>
<dbReference type="STRING" id="263820.PTO0850"/>
<dbReference type="PaxDb" id="263820-PTO0850"/>
<dbReference type="GeneID" id="2845253"/>
<dbReference type="KEGG" id="pto:PTO0850"/>
<dbReference type="PATRIC" id="fig|263820.9.peg.888"/>
<dbReference type="eggNOG" id="arCOG00982">
    <property type="taxonomic scope" value="Archaea"/>
</dbReference>
<dbReference type="HOGENOM" id="CLU_038362_0_0_2"/>
<dbReference type="InParanoid" id="Q6L0R7"/>
<dbReference type="OrthoDB" id="8656at2157"/>
<dbReference type="UniPathway" id="UPA00940"/>
<dbReference type="Proteomes" id="UP000000438">
    <property type="component" value="Chromosome"/>
</dbReference>
<dbReference type="GO" id="GO:0005737">
    <property type="term" value="C:cytoplasm"/>
    <property type="evidence" value="ECO:0007669"/>
    <property type="project" value="UniProtKB-SubCell"/>
</dbReference>
<dbReference type="GO" id="GO:0106357">
    <property type="term" value="F:glycerol-1-phosphate dehydrogenase (NAD+) activity"/>
    <property type="evidence" value="ECO:0007669"/>
    <property type="project" value="RHEA"/>
</dbReference>
<dbReference type="GO" id="GO:0106358">
    <property type="term" value="F:glycerol-1-phosphate dehydrogenase (NADP+) activity"/>
    <property type="evidence" value="ECO:0007669"/>
    <property type="project" value="RHEA"/>
</dbReference>
<dbReference type="GO" id="GO:0046872">
    <property type="term" value="F:metal ion binding"/>
    <property type="evidence" value="ECO:0007669"/>
    <property type="project" value="UniProtKB-KW"/>
</dbReference>
<dbReference type="GO" id="GO:0006650">
    <property type="term" value="P:glycerophospholipid metabolic process"/>
    <property type="evidence" value="ECO:0007669"/>
    <property type="project" value="UniProtKB-UniRule"/>
</dbReference>
<dbReference type="GO" id="GO:0008654">
    <property type="term" value="P:phospholipid biosynthetic process"/>
    <property type="evidence" value="ECO:0007669"/>
    <property type="project" value="UniProtKB-KW"/>
</dbReference>
<dbReference type="CDD" id="cd08173">
    <property type="entry name" value="Gro1PDH"/>
    <property type="match status" value="1"/>
</dbReference>
<dbReference type="Gene3D" id="3.40.50.1970">
    <property type="match status" value="1"/>
</dbReference>
<dbReference type="Gene3D" id="1.20.1090.10">
    <property type="entry name" value="Dehydroquinate synthase-like - alpha domain"/>
    <property type="match status" value="1"/>
</dbReference>
<dbReference type="HAMAP" id="MF_00497_A">
    <property type="entry name" value="G1P_dehydrogenase_A"/>
    <property type="match status" value="1"/>
</dbReference>
<dbReference type="InterPro" id="IPR023002">
    <property type="entry name" value="G1P_dehydrogenase_arc"/>
</dbReference>
<dbReference type="InterPro" id="IPR032837">
    <property type="entry name" value="G1PDH"/>
</dbReference>
<dbReference type="InterPro" id="IPR016205">
    <property type="entry name" value="Glycerol_DH"/>
</dbReference>
<dbReference type="NCBIfam" id="NF002022">
    <property type="entry name" value="PRK00843.1"/>
    <property type="match status" value="1"/>
</dbReference>
<dbReference type="PANTHER" id="PTHR43616">
    <property type="entry name" value="GLYCEROL DEHYDROGENASE"/>
    <property type="match status" value="1"/>
</dbReference>
<dbReference type="PANTHER" id="PTHR43616:SF5">
    <property type="entry name" value="GLYCEROL DEHYDROGENASE 1"/>
    <property type="match status" value="1"/>
</dbReference>
<dbReference type="Pfam" id="PF13685">
    <property type="entry name" value="Fe-ADH_2"/>
    <property type="match status" value="1"/>
</dbReference>
<dbReference type="PIRSF" id="PIRSF000112">
    <property type="entry name" value="Glycerol_dehydrogenase"/>
    <property type="match status" value="1"/>
</dbReference>
<dbReference type="SUPFAM" id="SSF56796">
    <property type="entry name" value="Dehydroquinate synthase-like"/>
    <property type="match status" value="1"/>
</dbReference>
<comment type="function">
    <text evidence="1">Catalyzes the NAD(P)H-dependent reduction of dihydroxyacetonephosphate (DHAP or glycerone phosphate) to glycerol 1-phosphate (G1P). The G1P thus generated is used as the glycerophosphate backbone of phospholipids in the cellular membranes of Archaea.</text>
</comment>
<comment type="catalytic activity">
    <reaction evidence="1">
        <text>sn-glycerol 1-phosphate + NAD(+) = dihydroxyacetone phosphate + NADH + H(+)</text>
        <dbReference type="Rhea" id="RHEA:21412"/>
        <dbReference type="ChEBI" id="CHEBI:15378"/>
        <dbReference type="ChEBI" id="CHEBI:57540"/>
        <dbReference type="ChEBI" id="CHEBI:57642"/>
        <dbReference type="ChEBI" id="CHEBI:57685"/>
        <dbReference type="ChEBI" id="CHEBI:57945"/>
        <dbReference type="EC" id="1.1.1.261"/>
    </reaction>
</comment>
<comment type="catalytic activity">
    <reaction evidence="1">
        <text>sn-glycerol 1-phosphate + NADP(+) = dihydroxyacetone phosphate + NADPH + H(+)</text>
        <dbReference type="Rhea" id="RHEA:21416"/>
        <dbReference type="ChEBI" id="CHEBI:15378"/>
        <dbReference type="ChEBI" id="CHEBI:57642"/>
        <dbReference type="ChEBI" id="CHEBI:57685"/>
        <dbReference type="ChEBI" id="CHEBI:57783"/>
        <dbReference type="ChEBI" id="CHEBI:58349"/>
        <dbReference type="EC" id="1.1.1.261"/>
    </reaction>
</comment>
<comment type="cofactor">
    <cofactor evidence="1">
        <name>Zn(2+)</name>
        <dbReference type="ChEBI" id="CHEBI:29105"/>
    </cofactor>
    <text evidence="1">Binds 1 zinc ion per subunit.</text>
</comment>
<comment type="pathway">
    <text evidence="1">Membrane lipid metabolism; glycerophospholipid metabolism.</text>
</comment>
<comment type="subcellular location">
    <subcellularLocation>
        <location evidence="1">Cytoplasm</location>
    </subcellularLocation>
</comment>
<comment type="similarity">
    <text evidence="1">Belongs to the glycerol-1-phosphate dehydrogenase family.</text>
</comment>
<protein>
    <recommendedName>
        <fullName evidence="1">Glycerol-1-phosphate dehydrogenase [NAD(P)+]</fullName>
        <shortName evidence="1">G1P dehydrogenase</shortName>
        <shortName evidence="1">G1PDH</shortName>
        <ecNumber evidence="1">1.1.1.261</ecNumber>
    </recommendedName>
    <alternativeName>
        <fullName evidence="1">Enantiomeric glycerophosphate synthase</fullName>
    </alternativeName>
    <alternativeName>
        <fullName evidence="1">sn-glycerol-1-phosphate dehydrogenase</fullName>
    </alternativeName>
</protein>
<sequence>MNFNKIKSMHFPSDVYIGHDAILNIGSVVSKFLKSGEVLLITGENTYNIAGKKVLSNLNDFDVNVIIASRATRDSIKSIEESLKNRRSGIVLGVGGGSKIDIAKKIAYDLGIPFISVPTTPSHDGIASPRASIYDGKSVYSEEATMPSAIVADTSIMVLAPYRYVAAGAADVISNITAVLDWKLANRLKGEEFSSTAAVMSEYAGRELIERSSMIQPGLEESIWLVTKQILASGAAMAIAGSSRPASGSEHLFSHAIEILGPGSSIHGEQCAMGSLISMYLHGGDWELLKNTYRKIGLNTRAESYGIGREVAIKALSIAHRIRPSRYTILGESDLSYNVAERILSITGII</sequence>
<proteinExistence type="inferred from homology"/>
<accession>Q6L0R7</accession>
<organism>
    <name type="scientific">Picrophilus torridus (strain ATCC 700027 / DSM 9790 / JCM 10055 / NBRC 100828 / KAW 2/3)</name>
    <dbReference type="NCBI Taxonomy" id="1122961"/>
    <lineage>
        <taxon>Archaea</taxon>
        <taxon>Methanobacteriati</taxon>
        <taxon>Thermoplasmatota</taxon>
        <taxon>Thermoplasmata</taxon>
        <taxon>Thermoplasmatales</taxon>
        <taxon>Picrophilaceae</taxon>
        <taxon>Picrophilus</taxon>
    </lineage>
</organism>